<keyword id="KW-0456">Lyase</keyword>
<keyword id="KW-0460">Magnesium</keyword>
<keyword id="KW-0479">Metal-binding</keyword>
<accession>B5REK4</accession>
<sequence>MNNAIFPNKFKAALAAQQVQIGCWSALASPITTEVLGLAGFDWLVLDGEHAPNDVTTLIPQLMALKGSASAPVVRVPTNEPVIIKRMLDIGFYNFLIPFVETQEEAARAVASTRYPPEGIRGVSVSHRANMFGTVPDYFAQSNKNITIIVQIESQLGVDNVDAIAATEGVDGIFVGPSDLAAALSHLGNASHPDVQQTIQHIFARAKAHGKPCGILAPVEADARRYLEWGATFVAVGSDLGAFRASTQKLADTFKK</sequence>
<name>GARL_SALG2</name>
<feature type="chain" id="PRO_1000140414" description="5-keto-4-deoxy-D-glucarate aldolase">
    <location>
        <begin position="1"/>
        <end position="256"/>
    </location>
</feature>
<feature type="active site" description="Proton acceptor" evidence="1">
    <location>
        <position position="50"/>
    </location>
</feature>
<feature type="binding site" evidence="1">
    <location>
        <position position="151"/>
    </location>
    <ligand>
        <name>substrate</name>
    </ligand>
</feature>
<feature type="binding site" evidence="1">
    <location>
        <position position="153"/>
    </location>
    <ligand>
        <name>Mg(2+)</name>
        <dbReference type="ChEBI" id="CHEBI:18420"/>
    </ligand>
</feature>
<feature type="binding site" evidence="1">
    <location>
        <position position="178"/>
    </location>
    <ligand>
        <name>substrate</name>
    </ligand>
</feature>
<feature type="binding site" evidence="1">
    <location>
        <position position="179"/>
    </location>
    <ligand>
        <name>Mg(2+)</name>
        <dbReference type="ChEBI" id="CHEBI:18420"/>
    </ligand>
</feature>
<feature type="binding site" evidence="1">
    <location>
        <position position="179"/>
    </location>
    <ligand>
        <name>substrate</name>
    </ligand>
</feature>
<feature type="site" description="Transition state stabilizer" evidence="1">
    <location>
        <position position="75"/>
    </location>
</feature>
<feature type="site" description="Increases basicity of active site His" evidence="1">
    <location>
        <position position="89"/>
    </location>
</feature>
<evidence type="ECO:0000255" key="1">
    <source>
        <dbReference type="HAMAP-Rule" id="MF_01291"/>
    </source>
</evidence>
<proteinExistence type="inferred from homology"/>
<gene>
    <name evidence="1" type="primary">garL</name>
    <name type="ordered locus">SG3145</name>
</gene>
<dbReference type="EC" id="4.1.2.20" evidence="1"/>
<dbReference type="EMBL" id="AM933173">
    <property type="protein sequence ID" value="CAR38944.1"/>
    <property type="molecule type" value="Genomic_DNA"/>
</dbReference>
<dbReference type="RefSeq" id="WP_001057718.1">
    <property type="nucleotide sequence ID" value="NC_011274.1"/>
</dbReference>
<dbReference type="SMR" id="B5REK4"/>
<dbReference type="KEGG" id="seg:SG3145"/>
<dbReference type="HOGENOM" id="CLU_059964_1_0_6"/>
<dbReference type="UniPathway" id="UPA00565">
    <property type="reaction ID" value="UER00630"/>
</dbReference>
<dbReference type="Proteomes" id="UP000008321">
    <property type="component" value="Chromosome"/>
</dbReference>
<dbReference type="GO" id="GO:0005737">
    <property type="term" value="C:cytoplasm"/>
    <property type="evidence" value="ECO:0007669"/>
    <property type="project" value="TreeGrafter"/>
</dbReference>
<dbReference type="GO" id="GO:0008672">
    <property type="term" value="F:2-dehydro-3-deoxyglucarate aldolase activity"/>
    <property type="evidence" value="ECO:0007669"/>
    <property type="project" value="UniProtKB-UniRule"/>
</dbReference>
<dbReference type="GO" id="GO:0000287">
    <property type="term" value="F:magnesium ion binding"/>
    <property type="evidence" value="ECO:0007669"/>
    <property type="project" value="UniProtKB-UniRule"/>
</dbReference>
<dbReference type="GO" id="GO:0042838">
    <property type="term" value="P:D-glucarate catabolic process"/>
    <property type="evidence" value="ECO:0007669"/>
    <property type="project" value="UniProtKB-UniRule"/>
</dbReference>
<dbReference type="GO" id="GO:0046392">
    <property type="term" value="P:galactarate catabolic process"/>
    <property type="evidence" value="ECO:0007669"/>
    <property type="project" value="UniProtKB-UniRule"/>
</dbReference>
<dbReference type="FunFam" id="3.20.20.60:FF:000004">
    <property type="entry name" value="5-keto-4-deoxy-D-glucarate aldolase"/>
    <property type="match status" value="1"/>
</dbReference>
<dbReference type="Gene3D" id="3.20.20.60">
    <property type="entry name" value="Phosphoenolpyruvate-binding domains"/>
    <property type="match status" value="1"/>
</dbReference>
<dbReference type="HAMAP" id="MF_01291">
    <property type="entry name" value="KDGluc_aldolase"/>
    <property type="match status" value="1"/>
</dbReference>
<dbReference type="InterPro" id="IPR005000">
    <property type="entry name" value="Aldolase/citrate-lyase_domain"/>
</dbReference>
<dbReference type="InterPro" id="IPR017648">
    <property type="entry name" value="GarL"/>
</dbReference>
<dbReference type="InterPro" id="IPR050251">
    <property type="entry name" value="HpcH-HpaI_aldolase"/>
</dbReference>
<dbReference type="InterPro" id="IPR015813">
    <property type="entry name" value="Pyrv/PenolPyrv_kinase-like_dom"/>
</dbReference>
<dbReference type="InterPro" id="IPR040442">
    <property type="entry name" value="Pyrv_kinase-like_dom_sf"/>
</dbReference>
<dbReference type="NCBIfam" id="TIGR03239">
    <property type="entry name" value="GarL"/>
    <property type="match status" value="1"/>
</dbReference>
<dbReference type="NCBIfam" id="NF007849">
    <property type="entry name" value="PRK10558.1"/>
    <property type="match status" value="1"/>
</dbReference>
<dbReference type="PANTHER" id="PTHR30502">
    <property type="entry name" value="2-KETO-3-DEOXY-L-RHAMNONATE ALDOLASE"/>
    <property type="match status" value="1"/>
</dbReference>
<dbReference type="PANTHER" id="PTHR30502:SF4">
    <property type="entry name" value="5-KETO-4-DEOXY-D-GLUCARATE ALDOLASE"/>
    <property type="match status" value="1"/>
</dbReference>
<dbReference type="Pfam" id="PF03328">
    <property type="entry name" value="HpcH_HpaI"/>
    <property type="match status" value="1"/>
</dbReference>
<dbReference type="SUPFAM" id="SSF51621">
    <property type="entry name" value="Phosphoenolpyruvate/pyruvate domain"/>
    <property type="match status" value="1"/>
</dbReference>
<reference key="1">
    <citation type="journal article" date="2008" name="Genome Res.">
        <title>Comparative genome analysis of Salmonella enteritidis PT4 and Salmonella gallinarum 287/91 provides insights into evolutionary and host adaptation pathways.</title>
        <authorList>
            <person name="Thomson N.R."/>
            <person name="Clayton D.J."/>
            <person name="Windhorst D."/>
            <person name="Vernikos G."/>
            <person name="Davidson S."/>
            <person name="Churcher C."/>
            <person name="Quail M.A."/>
            <person name="Stevens M."/>
            <person name="Jones M.A."/>
            <person name="Watson M."/>
            <person name="Barron A."/>
            <person name="Layton A."/>
            <person name="Pickard D."/>
            <person name="Kingsley R.A."/>
            <person name="Bignell A."/>
            <person name="Clark L."/>
            <person name="Harris B."/>
            <person name="Ormond D."/>
            <person name="Abdellah Z."/>
            <person name="Brooks K."/>
            <person name="Cherevach I."/>
            <person name="Chillingworth T."/>
            <person name="Woodward J."/>
            <person name="Norberczak H."/>
            <person name="Lord A."/>
            <person name="Arrowsmith C."/>
            <person name="Jagels K."/>
            <person name="Moule S."/>
            <person name="Mungall K."/>
            <person name="Saunders M."/>
            <person name="Whitehead S."/>
            <person name="Chabalgoity J.A."/>
            <person name="Maskell D."/>
            <person name="Humphreys T."/>
            <person name="Roberts M."/>
            <person name="Barrow P.A."/>
            <person name="Dougan G."/>
            <person name="Parkhill J."/>
        </authorList>
    </citation>
    <scope>NUCLEOTIDE SEQUENCE [LARGE SCALE GENOMIC DNA]</scope>
    <source>
        <strain>287/91 / NCTC 13346</strain>
    </source>
</reference>
<protein>
    <recommendedName>
        <fullName evidence="1">5-keto-4-deoxy-D-glucarate aldolase</fullName>
        <shortName evidence="1">KDGluc aldolase</shortName>
        <shortName evidence="1">KDGlucA</shortName>
        <ecNumber evidence="1">4.1.2.20</ecNumber>
    </recommendedName>
    <alternativeName>
        <fullName evidence="1">2-dehydro-3-deoxy-D-glucarate aldolase</fullName>
    </alternativeName>
    <alternativeName>
        <fullName evidence="1">2-keto-3-deoxy-D-glucarate aldolase</fullName>
    </alternativeName>
    <alternativeName>
        <fullName evidence="1">5-dehydro-4-deoxy-D-glucarate aldolase</fullName>
    </alternativeName>
    <alternativeName>
        <fullName evidence="1">Alpha-keto-beta-deoxy-D-glucarate aldolase</fullName>
    </alternativeName>
</protein>
<organism>
    <name type="scientific">Salmonella gallinarum (strain 287/91 / NCTC 13346)</name>
    <dbReference type="NCBI Taxonomy" id="550538"/>
    <lineage>
        <taxon>Bacteria</taxon>
        <taxon>Pseudomonadati</taxon>
        <taxon>Pseudomonadota</taxon>
        <taxon>Gammaproteobacteria</taxon>
        <taxon>Enterobacterales</taxon>
        <taxon>Enterobacteriaceae</taxon>
        <taxon>Salmonella</taxon>
    </lineage>
</organism>
<comment type="function">
    <text evidence="1">Catalyzes the reversible retro-aldol cleavage of both 5-keto-4-deoxy-D-glucarate and 2-keto-3-deoxy-D-glucarate to pyruvate and tartronic semialdehyde.</text>
</comment>
<comment type="catalytic activity">
    <reaction evidence="1">
        <text>5-dehydro-4-deoxy-D-glucarate = 2-hydroxy-3-oxopropanoate + pyruvate</text>
        <dbReference type="Rhea" id="RHEA:27726"/>
        <dbReference type="ChEBI" id="CHEBI:15361"/>
        <dbReference type="ChEBI" id="CHEBI:42819"/>
        <dbReference type="ChEBI" id="CHEBI:57978"/>
    </reaction>
</comment>
<comment type="catalytic activity">
    <reaction evidence="1">
        <text>2-dehydro-3-deoxy-D-glucarate = 2-hydroxy-3-oxopropanoate + pyruvate</text>
        <dbReference type="Rhea" id="RHEA:10268"/>
        <dbReference type="ChEBI" id="CHEBI:15361"/>
        <dbReference type="ChEBI" id="CHEBI:57978"/>
        <dbReference type="ChEBI" id="CHEBI:58098"/>
        <dbReference type="EC" id="4.1.2.20"/>
    </reaction>
</comment>
<comment type="cofactor">
    <cofactor evidence="1">
        <name>Mg(2+)</name>
        <dbReference type="ChEBI" id="CHEBI:18420"/>
    </cofactor>
    <text evidence="1">Binds 1 Mg(2+) ion per subunit.</text>
</comment>
<comment type="pathway">
    <text evidence="1">Carbohydrate acid metabolism; galactarate degradation; D-glycerate from galactarate: step 2/3.</text>
</comment>
<comment type="subunit">
    <text evidence="1">Homohexamer; trimer of dimers.</text>
</comment>
<comment type="similarity">
    <text evidence="1">Belongs to the HpcH/HpaI aldolase family. KDGluc aldolase subfamily.</text>
</comment>